<sequence>MIQYQDLLERILSDGAEKHDRTGTGTLSVFGHQMRFDLAAGFPMLTTKRLPLKAIVHELLWFLQGDTNIKYLHDHGVTIWDEWADANGDLGPVYGAQWRSWPTADGGSIDQIANVVEMIKRNPDSRRLMVTAWNPADVEKMALPPCHCLFQFYVANGKLSCQLYQRSADVFLGVPFNIASYALLTLMVAQVTGLKPGEFVHTLGDAHLYSNHLEQARLQLTRAPRALPVMTINPAVKDIFGFRYEDFTLTGYDPHPHIKAEVAV</sequence>
<feature type="chain" id="PRO_0000141011" description="Thymidylate synthase">
    <location>
        <begin position="1"/>
        <end position="264"/>
    </location>
</feature>
<feature type="active site" description="Nucleophile" evidence="1">
    <location>
        <position position="146"/>
    </location>
</feature>
<feature type="binding site" description="in other chain" evidence="1">
    <location>
        <position position="21"/>
    </location>
    <ligand>
        <name>dUMP</name>
        <dbReference type="ChEBI" id="CHEBI:246422"/>
        <note>ligand shared between dimeric partners</note>
    </ligand>
</feature>
<feature type="binding site" evidence="1">
    <location>
        <begin position="126"/>
        <end position="127"/>
    </location>
    <ligand>
        <name>dUMP</name>
        <dbReference type="ChEBI" id="CHEBI:246422"/>
        <note>ligand shared between dimeric partners</note>
    </ligand>
</feature>
<feature type="binding site" description="in other chain" evidence="1">
    <location>
        <begin position="166"/>
        <end position="169"/>
    </location>
    <ligand>
        <name>dUMP</name>
        <dbReference type="ChEBI" id="CHEBI:246422"/>
        <note>ligand shared between dimeric partners</note>
    </ligand>
</feature>
<feature type="binding site" evidence="1">
    <location>
        <position position="169"/>
    </location>
    <ligand>
        <name>(6R)-5,10-methylene-5,6,7,8-tetrahydrofolate</name>
        <dbReference type="ChEBI" id="CHEBI:15636"/>
    </ligand>
</feature>
<feature type="binding site" description="in other chain" evidence="1">
    <location>
        <position position="177"/>
    </location>
    <ligand>
        <name>dUMP</name>
        <dbReference type="ChEBI" id="CHEBI:246422"/>
        <note>ligand shared between dimeric partners</note>
    </ligand>
</feature>
<feature type="binding site" description="in other chain" evidence="1">
    <location>
        <begin position="207"/>
        <end position="209"/>
    </location>
    <ligand>
        <name>dUMP</name>
        <dbReference type="ChEBI" id="CHEBI:246422"/>
        <note>ligand shared between dimeric partners</note>
    </ligand>
</feature>
<feature type="binding site" evidence="1">
    <location>
        <position position="263"/>
    </location>
    <ligand>
        <name>(6R)-5,10-methylene-5,6,7,8-tetrahydrofolate</name>
        <dbReference type="ChEBI" id="CHEBI:15636"/>
    </ligand>
</feature>
<name>TYSY_RHOPA</name>
<keyword id="KW-0963">Cytoplasm</keyword>
<keyword id="KW-0489">Methyltransferase</keyword>
<keyword id="KW-0545">Nucleotide biosynthesis</keyword>
<keyword id="KW-0808">Transferase</keyword>
<comment type="function">
    <text evidence="1">Catalyzes the reductive methylation of 2'-deoxyuridine-5'-monophosphate (dUMP) to 2'-deoxythymidine-5'-monophosphate (dTMP) while utilizing 5,10-methylenetetrahydrofolate (mTHF) as the methyl donor and reductant in the reaction, yielding dihydrofolate (DHF) as a by-product. This enzymatic reaction provides an intracellular de novo source of dTMP, an essential precursor for DNA biosynthesis.</text>
</comment>
<comment type="catalytic activity">
    <reaction evidence="1">
        <text>dUMP + (6R)-5,10-methylene-5,6,7,8-tetrahydrofolate = 7,8-dihydrofolate + dTMP</text>
        <dbReference type="Rhea" id="RHEA:12104"/>
        <dbReference type="ChEBI" id="CHEBI:15636"/>
        <dbReference type="ChEBI" id="CHEBI:57451"/>
        <dbReference type="ChEBI" id="CHEBI:63528"/>
        <dbReference type="ChEBI" id="CHEBI:246422"/>
        <dbReference type="EC" id="2.1.1.45"/>
    </reaction>
</comment>
<comment type="pathway">
    <text evidence="1">Pyrimidine metabolism; dTTP biosynthesis.</text>
</comment>
<comment type="subunit">
    <text evidence="1">Homodimer.</text>
</comment>
<comment type="subcellular location">
    <subcellularLocation>
        <location evidence="1">Cytoplasm</location>
    </subcellularLocation>
</comment>
<comment type="similarity">
    <text evidence="1">Belongs to the thymidylate synthase family. Bacterial-type ThyA subfamily.</text>
</comment>
<organism>
    <name type="scientific">Rhodopseudomonas palustris (strain ATCC BAA-98 / CGA009)</name>
    <dbReference type="NCBI Taxonomy" id="258594"/>
    <lineage>
        <taxon>Bacteria</taxon>
        <taxon>Pseudomonadati</taxon>
        <taxon>Pseudomonadota</taxon>
        <taxon>Alphaproteobacteria</taxon>
        <taxon>Hyphomicrobiales</taxon>
        <taxon>Nitrobacteraceae</taxon>
        <taxon>Rhodopseudomonas</taxon>
    </lineage>
</organism>
<dbReference type="EC" id="2.1.1.45" evidence="1"/>
<dbReference type="EMBL" id="BX572604">
    <property type="protein sequence ID" value="CAE28934.1"/>
    <property type="molecule type" value="Genomic_DNA"/>
</dbReference>
<dbReference type="RefSeq" id="WP_011159033.1">
    <property type="nucleotide sequence ID" value="NZ_CP116810.1"/>
</dbReference>
<dbReference type="SMR" id="Q6N447"/>
<dbReference type="STRING" id="258594.RPA3493"/>
<dbReference type="GeneID" id="66894591"/>
<dbReference type="eggNOG" id="COG0207">
    <property type="taxonomic scope" value="Bacteria"/>
</dbReference>
<dbReference type="HOGENOM" id="CLU_021669_0_0_5"/>
<dbReference type="PhylomeDB" id="Q6N447"/>
<dbReference type="UniPathway" id="UPA00575"/>
<dbReference type="GO" id="GO:0005829">
    <property type="term" value="C:cytosol"/>
    <property type="evidence" value="ECO:0007669"/>
    <property type="project" value="TreeGrafter"/>
</dbReference>
<dbReference type="GO" id="GO:0004799">
    <property type="term" value="F:thymidylate synthase activity"/>
    <property type="evidence" value="ECO:0007669"/>
    <property type="project" value="UniProtKB-UniRule"/>
</dbReference>
<dbReference type="GO" id="GO:0006231">
    <property type="term" value="P:dTMP biosynthetic process"/>
    <property type="evidence" value="ECO:0007669"/>
    <property type="project" value="UniProtKB-UniRule"/>
</dbReference>
<dbReference type="GO" id="GO:0006235">
    <property type="term" value="P:dTTP biosynthetic process"/>
    <property type="evidence" value="ECO:0007669"/>
    <property type="project" value="UniProtKB-UniRule"/>
</dbReference>
<dbReference type="GO" id="GO:0032259">
    <property type="term" value="P:methylation"/>
    <property type="evidence" value="ECO:0007669"/>
    <property type="project" value="UniProtKB-KW"/>
</dbReference>
<dbReference type="CDD" id="cd00351">
    <property type="entry name" value="TS_Pyrimidine_HMase"/>
    <property type="match status" value="1"/>
</dbReference>
<dbReference type="FunFam" id="3.30.572.10:FF:000001">
    <property type="entry name" value="Thymidylate synthase"/>
    <property type="match status" value="1"/>
</dbReference>
<dbReference type="Gene3D" id="3.30.572.10">
    <property type="entry name" value="Thymidylate synthase/dCMP hydroxymethylase domain"/>
    <property type="match status" value="1"/>
</dbReference>
<dbReference type="HAMAP" id="MF_00008">
    <property type="entry name" value="Thymidy_synth_bact"/>
    <property type="match status" value="1"/>
</dbReference>
<dbReference type="InterPro" id="IPR045097">
    <property type="entry name" value="Thymidate_synth/dCMP_Mease"/>
</dbReference>
<dbReference type="InterPro" id="IPR023451">
    <property type="entry name" value="Thymidate_synth/dCMP_Mease_dom"/>
</dbReference>
<dbReference type="InterPro" id="IPR036926">
    <property type="entry name" value="Thymidate_synth/dCMP_Mease_sf"/>
</dbReference>
<dbReference type="InterPro" id="IPR000398">
    <property type="entry name" value="Thymidylate_synthase"/>
</dbReference>
<dbReference type="InterPro" id="IPR020940">
    <property type="entry name" value="Thymidylate_synthase_AS"/>
</dbReference>
<dbReference type="NCBIfam" id="NF002497">
    <property type="entry name" value="PRK01827.1-3"/>
    <property type="match status" value="1"/>
</dbReference>
<dbReference type="NCBIfam" id="NF002499">
    <property type="entry name" value="PRK01827.1-5"/>
    <property type="match status" value="1"/>
</dbReference>
<dbReference type="NCBIfam" id="TIGR03284">
    <property type="entry name" value="thym_sym"/>
    <property type="match status" value="2"/>
</dbReference>
<dbReference type="PANTHER" id="PTHR11548:SF9">
    <property type="entry name" value="THYMIDYLATE SYNTHASE"/>
    <property type="match status" value="1"/>
</dbReference>
<dbReference type="PANTHER" id="PTHR11548">
    <property type="entry name" value="THYMIDYLATE SYNTHASE 1"/>
    <property type="match status" value="1"/>
</dbReference>
<dbReference type="Pfam" id="PF00303">
    <property type="entry name" value="Thymidylat_synt"/>
    <property type="match status" value="1"/>
</dbReference>
<dbReference type="PRINTS" id="PR00108">
    <property type="entry name" value="THYMDSNTHASE"/>
</dbReference>
<dbReference type="SUPFAM" id="SSF55831">
    <property type="entry name" value="Thymidylate synthase/dCMP hydroxymethylase"/>
    <property type="match status" value="1"/>
</dbReference>
<dbReference type="PROSITE" id="PS00091">
    <property type="entry name" value="THYMIDYLATE_SYNTHASE"/>
    <property type="match status" value="1"/>
</dbReference>
<accession>Q6N447</accession>
<protein>
    <recommendedName>
        <fullName evidence="1">Thymidylate synthase</fullName>
        <shortName evidence="1">TS</shortName>
        <shortName evidence="1">TSase</shortName>
        <ecNumber evidence="1">2.1.1.45</ecNumber>
    </recommendedName>
</protein>
<evidence type="ECO:0000255" key="1">
    <source>
        <dbReference type="HAMAP-Rule" id="MF_00008"/>
    </source>
</evidence>
<gene>
    <name evidence="1" type="primary">thyA</name>
    <name type="ordered locus">RPA3493</name>
</gene>
<reference key="1">
    <citation type="journal article" date="2004" name="Nat. Biotechnol.">
        <title>Complete genome sequence of the metabolically versatile photosynthetic bacterium Rhodopseudomonas palustris.</title>
        <authorList>
            <person name="Larimer F.W."/>
            <person name="Chain P."/>
            <person name="Hauser L."/>
            <person name="Lamerdin J.E."/>
            <person name="Malfatti S."/>
            <person name="Do L."/>
            <person name="Land M.L."/>
            <person name="Pelletier D.A."/>
            <person name="Beatty J.T."/>
            <person name="Lang A.S."/>
            <person name="Tabita F.R."/>
            <person name="Gibson J.L."/>
            <person name="Hanson T.E."/>
            <person name="Bobst C."/>
            <person name="Torres y Torres J.L."/>
            <person name="Peres C."/>
            <person name="Harrison F.H."/>
            <person name="Gibson J."/>
            <person name="Harwood C.S."/>
        </authorList>
    </citation>
    <scope>NUCLEOTIDE SEQUENCE [LARGE SCALE GENOMIC DNA]</scope>
    <source>
        <strain>ATCC BAA-98 / CGA009</strain>
    </source>
</reference>
<proteinExistence type="inferred from homology"/>